<gene>
    <name evidence="4" type="primary">AAD16</name>
    <name evidence="6" type="ordered locus">YPL088W</name>
</gene>
<evidence type="ECO:0000250" key="1"/>
<evidence type="ECO:0000269" key="2">
    <source>
    </source>
</evidence>
<evidence type="ECO:0000269" key="3">
    <source>
    </source>
</evidence>
<evidence type="ECO:0000303" key="4">
    <source>
    </source>
</evidence>
<evidence type="ECO:0000305" key="5"/>
<evidence type="ECO:0000312" key="6">
    <source>
        <dbReference type="SGD" id="S000006009"/>
    </source>
</evidence>
<sequence>MVLVKQVRLGNSGLKISPIVIGCMSYGSKKWADWVIEDKTQIFKIMKHCYDKGLRTFDTADFYSNGLSERIIKEFLEYYSIKRETVVIMTKIYFPVDETLDLHHNFTLNEFEELDLSNQRGLSRKHIIAGVENSVKRLGTYIDLLQIHRLDHETPMKEIMKALNDVVEAGHVRYIGASSMLATEFAELQFTADKYGWFQFISSQSYYNLLYREDERELIPFAKRHNIGLLPWSPNARGMLTRPLNQSTDRIKSDPTFKSLHLDNLEEEQKEIINRVEKVSKDKKVSMAMLSIAWVLHKGCHPIVGLNTTARVDEAIAALQVTLTEEEIKYLEEPYKPQRQRC</sequence>
<name>AAD16_YEAST</name>
<feature type="chain" id="PRO_0000238634" description="Putative aryl-alcohol dehydrogenase AAD16">
    <location>
        <begin position="1"/>
        <end position="342"/>
    </location>
</feature>
<dbReference type="EC" id="1.1.1.-"/>
<dbReference type="EMBL" id="U43281">
    <property type="protein sequence ID" value="AAB68211.1"/>
    <property type="molecule type" value="Genomic_DNA"/>
</dbReference>
<dbReference type="EMBL" id="BK006949">
    <property type="protein sequence ID" value="DAA11345.1"/>
    <property type="molecule type" value="Genomic_DNA"/>
</dbReference>
<dbReference type="PIR" id="S61978">
    <property type="entry name" value="S61978"/>
</dbReference>
<dbReference type="RefSeq" id="NP_015237.1">
    <property type="nucleotide sequence ID" value="NM_001183902.1"/>
</dbReference>
<dbReference type="SMR" id="Q02895"/>
<dbReference type="BioGRID" id="36093">
    <property type="interactions" value="43"/>
</dbReference>
<dbReference type="DIP" id="DIP-4021N"/>
<dbReference type="FunCoup" id="Q02895">
    <property type="interactions" value="211"/>
</dbReference>
<dbReference type="IntAct" id="Q02895">
    <property type="interactions" value="11"/>
</dbReference>
<dbReference type="MINT" id="Q02895"/>
<dbReference type="STRING" id="4932.YPL088W"/>
<dbReference type="iPTMnet" id="Q02895"/>
<dbReference type="PaxDb" id="4932-YPL088W"/>
<dbReference type="PeptideAtlas" id="Q02895"/>
<dbReference type="EnsemblFungi" id="YPL088W_mRNA">
    <property type="protein sequence ID" value="YPL088W"/>
    <property type="gene ID" value="YPL088W"/>
</dbReference>
<dbReference type="GeneID" id="856017"/>
<dbReference type="KEGG" id="sce:YPL088W"/>
<dbReference type="AGR" id="SGD:S000006009"/>
<dbReference type="SGD" id="S000006009">
    <property type="gene designation" value="YPL088W"/>
</dbReference>
<dbReference type="VEuPathDB" id="FungiDB:YPL088W"/>
<dbReference type="eggNOG" id="KOG1575">
    <property type="taxonomic scope" value="Eukaryota"/>
</dbReference>
<dbReference type="HOGENOM" id="CLU_023205_2_0_1"/>
<dbReference type="InParanoid" id="Q02895"/>
<dbReference type="OMA" id="HIMDSVE"/>
<dbReference type="OrthoDB" id="48988at2759"/>
<dbReference type="BioCyc" id="YEAST:G3O-33993-MONOMER"/>
<dbReference type="BioGRID-ORCS" id="856017">
    <property type="hits" value="0 hits in 10 CRISPR screens"/>
</dbReference>
<dbReference type="PRO" id="PR:Q02895"/>
<dbReference type="Proteomes" id="UP000002311">
    <property type="component" value="Chromosome XVI"/>
</dbReference>
<dbReference type="RNAct" id="Q02895">
    <property type="molecule type" value="protein"/>
</dbReference>
<dbReference type="GO" id="GO:0005829">
    <property type="term" value="C:cytosol"/>
    <property type="evidence" value="ECO:0000314"/>
    <property type="project" value="SGD"/>
</dbReference>
<dbReference type="GO" id="GO:0047681">
    <property type="term" value="F:aryl-alcohol dehydrogenase (NADP+) activity"/>
    <property type="evidence" value="ECO:0000250"/>
    <property type="project" value="SGD"/>
</dbReference>
<dbReference type="GO" id="GO:0006081">
    <property type="term" value="P:aldehyde metabolic process"/>
    <property type="evidence" value="ECO:0000250"/>
    <property type="project" value="SGD"/>
</dbReference>
<dbReference type="CDD" id="cd19079">
    <property type="entry name" value="AKR_EcYajO-like"/>
    <property type="match status" value="1"/>
</dbReference>
<dbReference type="FunFam" id="3.20.20.100:FF:000004">
    <property type="entry name" value="Oxidoreductase, aldo/keto reductase"/>
    <property type="match status" value="1"/>
</dbReference>
<dbReference type="Gene3D" id="3.20.20.100">
    <property type="entry name" value="NADP-dependent oxidoreductase domain"/>
    <property type="match status" value="1"/>
</dbReference>
<dbReference type="InterPro" id="IPR050523">
    <property type="entry name" value="AKR_Detox_Biosynth"/>
</dbReference>
<dbReference type="InterPro" id="IPR023210">
    <property type="entry name" value="NADP_OxRdtase_dom"/>
</dbReference>
<dbReference type="InterPro" id="IPR036812">
    <property type="entry name" value="NADP_OxRdtase_dom_sf"/>
</dbReference>
<dbReference type="PANTHER" id="PTHR43364:SF15">
    <property type="entry name" value="ARYL-ALCOHOL DEHYDROGENASE AAD16-RELATED"/>
    <property type="match status" value="1"/>
</dbReference>
<dbReference type="PANTHER" id="PTHR43364">
    <property type="entry name" value="NADH-SPECIFIC METHYLGLYOXAL REDUCTASE-RELATED"/>
    <property type="match status" value="1"/>
</dbReference>
<dbReference type="Pfam" id="PF00248">
    <property type="entry name" value="Aldo_ket_red"/>
    <property type="match status" value="1"/>
</dbReference>
<dbReference type="SUPFAM" id="SSF51430">
    <property type="entry name" value="NAD(P)-linked oxidoreductase"/>
    <property type="match status" value="1"/>
</dbReference>
<comment type="function">
    <text evidence="1">Putative aryl-alcohol dehydrogenase.</text>
</comment>
<comment type="induction">
    <text evidence="2 3">By cell wall stress and the YRR1 transcription factor.</text>
</comment>
<comment type="similarity">
    <text evidence="5">Belongs to the aldo/keto reductase family. Aldo/keto reductase 2 subfamily.</text>
</comment>
<protein>
    <recommendedName>
        <fullName evidence="4">Putative aryl-alcohol dehydrogenase AAD16</fullName>
        <ecNumber>1.1.1.-</ecNumber>
    </recommendedName>
</protein>
<accession>Q02895</accession>
<accession>D6W3S9</accession>
<keyword id="KW-0560">Oxidoreductase</keyword>
<keyword id="KW-1185">Reference proteome</keyword>
<organism>
    <name type="scientific">Saccharomyces cerevisiae (strain ATCC 204508 / S288c)</name>
    <name type="common">Baker's yeast</name>
    <dbReference type="NCBI Taxonomy" id="559292"/>
    <lineage>
        <taxon>Eukaryota</taxon>
        <taxon>Fungi</taxon>
        <taxon>Dikarya</taxon>
        <taxon>Ascomycota</taxon>
        <taxon>Saccharomycotina</taxon>
        <taxon>Saccharomycetes</taxon>
        <taxon>Saccharomycetales</taxon>
        <taxon>Saccharomycetaceae</taxon>
        <taxon>Saccharomyces</taxon>
    </lineage>
</organism>
<proteinExistence type="evidence at protein level"/>
<reference key="1">
    <citation type="journal article" date="1997" name="Nature">
        <title>The nucleotide sequence of Saccharomyces cerevisiae chromosome XVI.</title>
        <authorList>
            <person name="Bussey H."/>
            <person name="Storms R.K."/>
            <person name="Ahmed A."/>
            <person name="Albermann K."/>
            <person name="Allen E."/>
            <person name="Ansorge W."/>
            <person name="Araujo R."/>
            <person name="Aparicio A."/>
            <person name="Barrell B.G."/>
            <person name="Badcock K."/>
            <person name="Benes V."/>
            <person name="Botstein D."/>
            <person name="Bowman S."/>
            <person name="Brueckner M."/>
            <person name="Carpenter J."/>
            <person name="Cherry J.M."/>
            <person name="Chung E."/>
            <person name="Churcher C.M."/>
            <person name="Coster F."/>
            <person name="Davis K."/>
            <person name="Davis R.W."/>
            <person name="Dietrich F.S."/>
            <person name="Delius H."/>
            <person name="DiPaolo T."/>
            <person name="Dubois E."/>
            <person name="Duesterhoeft A."/>
            <person name="Duncan M."/>
            <person name="Floeth M."/>
            <person name="Fortin N."/>
            <person name="Friesen J.D."/>
            <person name="Fritz C."/>
            <person name="Goffeau A."/>
            <person name="Hall J."/>
            <person name="Hebling U."/>
            <person name="Heumann K."/>
            <person name="Hilbert H."/>
            <person name="Hillier L.W."/>
            <person name="Hunicke-Smith S."/>
            <person name="Hyman R.W."/>
            <person name="Johnston M."/>
            <person name="Kalman S."/>
            <person name="Kleine K."/>
            <person name="Komp C."/>
            <person name="Kurdi O."/>
            <person name="Lashkari D."/>
            <person name="Lew H."/>
            <person name="Lin A."/>
            <person name="Lin D."/>
            <person name="Louis E.J."/>
            <person name="Marathe R."/>
            <person name="Messenguy F."/>
            <person name="Mewes H.-W."/>
            <person name="Mirtipati S."/>
            <person name="Moestl D."/>
            <person name="Mueller-Auer S."/>
            <person name="Namath A."/>
            <person name="Nentwich U."/>
            <person name="Oefner P."/>
            <person name="Pearson D."/>
            <person name="Petel F.X."/>
            <person name="Pohl T.M."/>
            <person name="Purnelle B."/>
            <person name="Rajandream M.A."/>
            <person name="Rechmann S."/>
            <person name="Rieger M."/>
            <person name="Riles L."/>
            <person name="Roberts D."/>
            <person name="Schaefer M."/>
            <person name="Scharfe M."/>
            <person name="Scherens B."/>
            <person name="Schramm S."/>
            <person name="Schroeder M."/>
            <person name="Sdicu A.-M."/>
            <person name="Tettelin H."/>
            <person name="Urrestarazu L.A."/>
            <person name="Ushinsky S."/>
            <person name="Vierendeels F."/>
            <person name="Vissers S."/>
            <person name="Voss H."/>
            <person name="Walsh S.V."/>
            <person name="Wambutt R."/>
            <person name="Wang Y."/>
            <person name="Wedler E."/>
            <person name="Wedler H."/>
            <person name="Winnett E."/>
            <person name="Zhong W.-W."/>
            <person name="Zollner A."/>
            <person name="Vo D.H."/>
            <person name="Hani J."/>
        </authorList>
    </citation>
    <scope>NUCLEOTIDE SEQUENCE [LARGE SCALE GENOMIC DNA]</scope>
    <source>
        <strain>ATCC 204508 / S288c</strain>
    </source>
</reference>
<reference key="2">
    <citation type="journal article" date="2014" name="G3 (Bethesda)">
        <title>The reference genome sequence of Saccharomyces cerevisiae: Then and now.</title>
        <authorList>
            <person name="Engel S.R."/>
            <person name="Dietrich F.S."/>
            <person name="Fisk D.G."/>
            <person name="Binkley G."/>
            <person name="Balakrishnan R."/>
            <person name="Costanzo M.C."/>
            <person name="Dwight S.S."/>
            <person name="Hitz B.C."/>
            <person name="Karra K."/>
            <person name="Nash R.S."/>
            <person name="Weng S."/>
            <person name="Wong E.D."/>
            <person name="Lloyd P."/>
            <person name="Skrzypek M.S."/>
            <person name="Miyasato S.R."/>
            <person name="Simison M."/>
            <person name="Cherry J.M."/>
        </authorList>
    </citation>
    <scope>GENOME REANNOTATION</scope>
    <source>
        <strain>ATCC 204508 / S288c</strain>
    </source>
</reference>
<reference key="3">
    <citation type="journal article" date="1999" name="Genetics">
        <title>Analysis of the seven-member AAD gene set demonstrates that genetic redundancy in yeast may be more apparent than real.</title>
        <authorList>
            <person name="Delneri D."/>
            <person name="Gardner D.C.J."/>
            <person name="Oliver S.G."/>
        </authorList>
    </citation>
    <scope>GENE NAME</scope>
</reference>
<reference key="4">
    <citation type="journal article" date="2002" name="Mol. Cell. Biol.">
        <title>New insights into the pleiotropic drug resistance network from genome-wide characterization of the YRR1 transcription factor regulation system.</title>
        <authorList>
            <person name="Le Crom S."/>
            <person name="Devaux F."/>
            <person name="Marc P."/>
            <person name="Zhang X."/>
            <person name="Moye-Rowley W.S."/>
            <person name="Jacq C."/>
        </authorList>
    </citation>
    <scope>INDUCTION</scope>
</reference>
<reference key="5">
    <citation type="journal article" date="2004" name="Yeast">
        <title>Characterization of the transcriptional response to cell wall stress in Saccharomyces cerevisiae.</title>
        <authorList>
            <person name="Boorsma A."/>
            <person name="de Nobel H."/>
            <person name="ter Riet B."/>
            <person name="Bargmann B."/>
            <person name="Brul S."/>
            <person name="Hellingwerf K.J."/>
            <person name="Klis F.M."/>
        </authorList>
    </citation>
    <scope>INDUCTION</scope>
</reference>
<reference key="6">
    <citation type="journal article" date="2012" name="Proc. Natl. Acad. Sci. U.S.A.">
        <title>N-terminal acetylome analyses and functional insights of the N-terminal acetyltransferase NatB.</title>
        <authorList>
            <person name="Van Damme P."/>
            <person name="Lasa M."/>
            <person name="Polevoda B."/>
            <person name="Gazquez C."/>
            <person name="Elosegui-Artola A."/>
            <person name="Kim D.S."/>
            <person name="De Juan-Pardo E."/>
            <person name="Demeyer K."/>
            <person name="Hole K."/>
            <person name="Larrea E."/>
            <person name="Timmerman E."/>
            <person name="Prieto J."/>
            <person name="Arnesen T."/>
            <person name="Sherman F."/>
            <person name="Gevaert K."/>
            <person name="Aldabe R."/>
        </authorList>
    </citation>
    <scope>IDENTIFICATION BY MASS SPECTROMETRY [LARGE SCALE ANALYSIS]</scope>
</reference>